<protein>
    <recommendedName>
        <fullName evidence="1">Proline--tRNA ligase</fullName>
        <ecNumber evidence="1">6.1.1.15</ecNumber>
    </recommendedName>
    <alternativeName>
        <fullName evidence="1">Prolyl-tRNA synthetase</fullName>
        <shortName evidence="1">ProRS</shortName>
    </alternativeName>
</protein>
<gene>
    <name evidence="1" type="primary">proS</name>
    <name type="ordered locus">CCA_00244</name>
</gene>
<dbReference type="EC" id="6.1.1.15" evidence="1"/>
<dbReference type="EMBL" id="AE015925">
    <property type="protein sequence ID" value="AAP04995.1"/>
    <property type="molecule type" value="Genomic_DNA"/>
</dbReference>
<dbReference type="RefSeq" id="WP_011006213.1">
    <property type="nucleotide sequence ID" value="NC_003361.3"/>
</dbReference>
<dbReference type="SMR" id="Q824A9"/>
<dbReference type="STRING" id="227941.CCA_00244"/>
<dbReference type="KEGG" id="cca:CCA_00244"/>
<dbReference type="eggNOG" id="COG0442">
    <property type="taxonomic scope" value="Bacteria"/>
</dbReference>
<dbReference type="HOGENOM" id="CLU_016739_0_0_0"/>
<dbReference type="OrthoDB" id="9809052at2"/>
<dbReference type="Proteomes" id="UP000002193">
    <property type="component" value="Chromosome"/>
</dbReference>
<dbReference type="GO" id="GO:0005829">
    <property type="term" value="C:cytosol"/>
    <property type="evidence" value="ECO:0007669"/>
    <property type="project" value="TreeGrafter"/>
</dbReference>
<dbReference type="GO" id="GO:0002161">
    <property type="term" value="F:aminoacyl-tRNA deacylase activity"/>
    <property type="evidence" value="ECO:0007669"/>
    <property type="project" value="InterPro"/>
</dbReference>
<dbReference type="GO" id="GO:0005524">
    <property type="term" value="F:ATP binding"/>
    <property type="evidence" value="ECO:0007669"/>
    <property type="project" value="UniProtKB-UniRule"/>
</dbReference>
<dbReference type="GO" id="GO:0004827">
    <property type="term" value="F:proline-tRNA ligase activity"/>
    <property type="evidence" value="ECO:0007669"/>
    <property type="project" value="UniProtKB-UniRule"/>
</dbReference>
<dbReference type="GO" id="GO:0006433">
    <property type="term" value="P:prolyl-tRNA aminoacylation"/>
    <property type="evidence" value="ECO:0007669"/>
    <property type="project" value="UniProtKB-UniRule"/>
</dbReference>
<dbReference type="CDD" id="cd04334">
    <property type="entry name" value="ProRS-INS"/>
    <property type="match status" value="1"/>
</dbReference>
<dbReference type="CDD" id="cd00861">
    <property type="entry name" value="ProRS_anticodon_short"/>
    <property type="match status" value="1"/>
</dbReference>
<dbReference type="CDD" id="cd00779">
    <property type="entry name" value="ProRS_core_prok"/>
    <property type="match status" value="1"/>
</dbReference>
<dbReference type="Gene3D" id="3.40.50.800">
    <property type="entry name" value="Anticodon-binding domain"/>
    <property type="match status" value="1"/>
</dbReference>
<dbReference type="Gene3D" id="3.30.930.10">
    <property type="entry name" value="Bira Bifunctional Protein, Domain 2"/>
    <property type="match status" value="1"/>
</dbReference>
<dbReference type="Gene3D" id="3.90.960.10">
    <property type="entry name" value="YbaK/aminoacyl-tRNA synthetase-associated domain"/>
    <property type="match status" value="1"/>
</dbReference>
<dbReference type="HAMAP" id="MF_01569">
    <property type="entry name" value="Pro_tRNA_synth_type1"/>
    <property type="match status" value="1"/>
</dbReference>
<dbReference type="InterPro" id="IPR002314">
    <property type="entry name" value="aa-tRNA-synt_IIb"/>
</dbReference>
<dbReference type="InterPro" id="IPR006195">
    <property type="entry name" value="aa-tRNA-synth_II"/>
</dbReference>
<dbReference type="InterPro" id="IPR045864">
    <property type="entry name" value="aa-tRNA-synth_II/BPL/LPL"/>
</dbReference>
<dbReference type="InterPro" id="IPR004154">
    <property type="entry name" value="Anticodon-bd"/>
</dbReference>
<dbReference type="InterPro" id="IPR036621">
    <property type="entry name" value="Anticodon-bd_dom_sf"/>
</dbReference>
<dbReference type="InterPro" id="IPR002316">
    <property type="entry name" value="Pro-tRNA-ligase_IIa"/>
</dbReference>
<dbReference type="InterPro" id="IPR004500">
    <property type="entry name" value="Pro-tRNA-synth_IIa_bac-type"/>
</dbReference>
<dbReference type="InterPro" id="IPR023717">
    <property type="entry name" value="Pro-tRNA-Synthase_IIa_type1"/>
</dbReference>
<dbReference type="InterPro" id="IPR050062">
    <property type="entry name" value="Pro-tRNA_synthetase"/>
</dbReference>
<dbReference type="InterPro" id="IPR044140">
    <property type="entry name" value="ProRS_anticodon_short"/>
</dbReference>
<dbReference type="InterPro" id="IPR033730">
    <property type="entry name" value="ProRS_core_prok"/>
</dbReference>
<dbReference type="InterPro" id="IPR036754">
    <property type="entry name" value="YbaK/aa-tRNA-synt-asso_dom_sf"/>
</dbReference>
<dbReference type="InterPro" id="IPR007214">
    <property type="entry name" value="YbaK/aa-tRNA-synth-assoc-dom"/>
</dbReference>
<dbReference type="NCBIfam" id="NF006625">
    <property type="entry name" value="PRK09194.1"/>
    <property type="match status" value="1"/>
</dbReference>
<dbReference type="NCBIfam" id="TIGR00409">
    <property type="entry name" value="proS_fam_II"/>
    <property type="match status" value="1"/>
</dbReference>
<dbReference type="PANTHER" id="PTHR42753">
    <property type="entry name" value="MITOCHONDRIAL RIBOSOME PROTEIN L39/PROLYL-TRNA LIGASE FAMILY MEMBER"/>
    <property type="match status" value="1"/>
</dbReference>
<dbReference type="PANTHER" id="PTHR42753:SF2">
    <property type="entry name" value="PROLINE--TRNA LIGASE"/>
    <property type="match status" value="1"/>
</dbReference>
<dbReference type="Pfam" id="PF03129">
    <property type="entry name" value="HGTP_anticodon"/>
    <property type="match status" value="1"/>
</dbReference>
<dbReference type="Pfam" id="PF00587">
    <property type="entry name" value="tRNA-synt_2b"/>
    <property type="match status" value="1"/>
</dbReference>
<dbReference type="Pfam" id="PF04073">
    <property type="entry name" value="tRNA_edit"/>
    <property type="match status" value="1"/>
</dbReference>
<dbReference type="PRINTS" id="PR01046">
    <property type="entry name" value="TRNASYNTHPRO"/>
</dbReference>
<dbReference type="SUPFAM" id="SSF52954">
    <property type="entry name" value="Class II aaRS ABD-related"/>
    <property type="match status" value="1"/>
</dbReference>
<dbReference type="SUPFAM" id="SSF55681">
    <property type="entry name" value="Class II aaRS and biotin synthetases"/>
    <property type="match status" value="1"/>
</dbReference>
<dbReference type="SUPFAM" id="SSF55826">
    <property type="entry name" value="YbaK/ProRS associated domain"/>
    <property type="match status" value="1"/>
</dbReference>
<dbReference type="PROSITE" id="PS50862">
    <property type="entry name" value="AA_TRNA_LIGASE_II"/>
    <property type="match status" value="1"/>
</dbReference>
<name>SYP_CHLCV</name>
<sequence length="577" mass="65881">MKTSQLFYKTSKNANKEAAVLSYELLEKAGYIFKTAKGIYTYTPLFWRVALKMMDIVREELNAIGGQELVLPILHPAELWQKTGRWEAFRSEGLLYTLTDREDKELCLAPTHEEVVSMFVSQWLSGRKQLPIHLYQIATKFRDEIRPRFGLMRAREFLMEDSYTFSDSPEQMNEQYAKLRQAYQNIFDRLEIKYVIVEADGGKIGKGKSEEFHVLCSLGEDTICVSGAYGANIEAAVSQPPQYTYDKEHLPIEEVATPDVRTMEHLQDFFSLPSHKIIKTLVVKLSYGEKDKFVAISIRGDRQINLTKIRSKLNADECILASDEELQQHLGTEKGFIGPLNCPIELYADETTRCMTNFICAGNTKDKHYKNVNWDRDIPRPEYGDFLLAEAGDLCPANGNAPYEVFEGVEVAHIFNLGTRYTECFEVGFQNEQEEQQTCWMGTYGIGIGRTLAACIEQLADDRGIVWPKAIAPFDIAILYNGGDAASQEAAEKIYKDLQNYGYAPLLDDRNERLGFKLKDSDLIGIPYKLILGKTFQNSGVLEIESRSREKFFVEPKDFFNWCKNYFPKPRGFSPIS</sequence>
<proteinExistence type="inferred from homology"/>
<organism>
    <name type="scientific">Chlamydia caviae (strain ATCC VR-813 / DSM 19441 / 03DC25 / GPIC)</name>
    <name type="common">Chlamydophila caviae</name>
    <dbReference type="NCBI Taxonomy" id="227941"/>
    <lineage>
        <taxon>Bacteria</taxon>
        <taxon>Pseudomonadati</taxon>
        <taxon>Chlamydiota</taxon>
        <taxon>Chlamydiia</taxon>
        <taxon>Chlamydiales</taxon>
        <taxon>Chlamydiaceae</taxon>
        <taxon>Chlamydia/Chlamydophila group</taxon>
        <taxon>Chlamydia</taxon>
    </lineage>
</organism>
<reference key="1">
    <citation type="journal article" date="2003" name="Nucleic Acids Res.">
        <title>Genome sequence of Chlamydophila caviae (Chlamydia psittaci GPIC): examining the role of niche-specific genes in the evolution of the Chlamydiaceae.</title>
        <authorList>
            <person name="Read T.D."/>
            <person name="Myers G.S.A."/>
            <person name="Brunham R.C."/>
            <person name="Nelson W.C."/>
            <person name="Paulsen I.T."/>
            <person name="Heidelberg J.F."/>
            <person name="Holtzapple E.K."/>
            <person name="Khouri H.M."/>
            <person name="Federova N.B."/>
            <person name="Carty H.A."/>
            <person name="Umayam L.A."/>
            <person name="Haft D.H."/>
            <person name="Peterson J.D."/>
            <person name="Beanan M.J."/>
            <person name="White O."/>
            <person name="Salzberg S.L."/>
            <person name="Hsia R.-C."/>
            <person name="McClarty G."/>
            <person name="Rank R.G."/>
            <person name="Bavoil P.M."/>
            <person name="Fraser C.M."/>
        </authorList>
    </citation>
    <scope>NUCLEOTIDE SEQUENCE [LARGE SCALE GENOMIC DNA]</scope>
    <source>
        <strain>ATCC VR-813 / DSM 19441 / 03DC25 / GPIC</strain>
    </source>
</reference>
<keyword id="KW-0030">Aminoacyl-tRNA synthetase</keyword>
<keyword id="KW-0067">ATP-binding</keyword>
<keyword id="KW-0963">Cytoplasm</keyword>
<keyword id="KW-0436">Ligase</keyword>
<keyword id="KW-0547">Nucleotide-binding</keyword>
<keyword id="KW-0648">Protein biosynthesis</keyword>
<feature type="chain" id="PRO_0000248668" description="Proline--tRNA ligase">
    <location>
        <begin position="1"/>
        <end position="577"/>
    </location>
</feature>
<evidence type="ECO:0000255" key="1">
    <source>
        <dbReference type="HAMAP-Rule" id="MF_01569"/>
    </source>
</evidence>
<comment type="function">
    <text evidence="1">Catalyzes the attachment of proline to tRNA(Pro) in a two-step reaction: proline is first activated by ATP to form Pro-AMP and then transferred to the acceptor end of tRNA(Pro). As ProRS can inadvertently accommodate and process non-cognate amino acids such as alanine and cysteine, to avoid such errors it has two additional distinct editing activities against alanine. One activity is designated as 'pretransfer' editing and involves the tRNA(Pro)-independent hydrolysis of activated Ala-AMP. The other activity is designated 'posttransfer' editing and involves deacylation of mischarged Ala-tRNA(Pro). The misacylated Cys-tRNA(Pro) is not edited by ProRS.</text>
</comment>
<comment type="catalytic activity">
    <reaction evidence="1">
        <text>tRNA(Pro) + L-proline + ATP = L-prolyl-tRNA(Pro) + AMP + diphosphate</text>
        <dbReference type="Rhea" id="RHEA:14305"/>
        <dbReference type="Rhea" id="RHEA-COMP:9700"/>
        <dbReference type="Rhea" id="RHEA-COMP:9702"/>
        <dbReference type="ChEBI" id="CHEBI:30616"/>
        <dbReference type="ChEBI" id="CHEBI:33019"/>
        <dbReference type="ChEBI" id="CHEBI:60039"/>
        <dbReference type="ChEBI" id="CHEBI:78442"/>
        <dbReference type="ChEBI" id="CHEBI:78532"/>
        <dbReference type="ChEBI" id="CHEBI:456215"/>
        <dbReference type="EC" id="6.1.1.15"/>
    </reaction>
</comment>
<comment type="subunit">
    <text evidence="1">Homodimer.</text>
</comment>
<comment type="subcellular location">
    <subcellularLocation>
        <location evidence="1">Cytoplasm</location>
    </subcellularLocation>
</comment>
<comment type="domain">
    <text evidence="1">Consists of three domains: the N-terminal catalytic domain, the editing domain and the C-terminal anticodon-binding domain.</text>
</comment>
<comment type="similarity">
    <text evidence="1">Belongs to the class-II aminoacyl-tRNA synthetase family. ProS type 1 subfamily.</text>
</comment>
<accession>Q824A9</accession>